<gene>
    <name evidence="8 10" type="primary">mv</name>
    <name evidence="10" type="synonym">CG11814</name>
    <name evidence="10" type="synonym">CG5691</name>
    <name evidence="10" type="ORF">CG42863</name>
</gene>
<dbReference type="EMBL" id="AE014296">
    <property type="protein sequence ID" value="AAF47598.2"/>
    <property type="molecule type" value="Genomic_DNA"/>
</dbReference>
<dbReference type="RefSeq" id="NP_647681.2">
    <property type="nucleotide sequence ID" value="NM_139424.2"/>
</dbReference>
<dbReference type="SMR" id="Q9W060"/>
<dbReference type="FunCoup" id="Q9W060">
    <property type="interactions" value="931"/>
</dbReference>
<dbReference type="IntAct" id="Q9W060">
    <property type="interactions" value="9"/>
</dbReference>
<dbReference type="STRING" id="7227.FBpp0293022"/>
<dbReference type="GlyGen" id="Q9W060">
    <property type="glycosylation" value="4 sites"/>
</dbReference>
<dbReference type="PaxDb" id="7227-FBpp0293022"/>
<dbReference type="EnsemblMetazoa" id="FBtr0304060">
    <property type="protein sequence ID" value="FBpp0293022"/>
    <property type="gene ID" value="FBgn0288310"/>
</dbReference>
<dbReference type="GeneID" id="38259"/>
<dbReference type="KEGG" id="dme:Dmel_CG42863"/>
<dbReference type="UCSC" id="CG11814-RA">
    <property type="organism name" value="d. melanogaster"/>
</dbReference>
<dbReference type="AGR" id="FB:FBgn0288310"/>
<dbReference type="CTD" id="104144"/>
<dbReference type="FlyBase" id="FBgn0288310">
    <property type="gene designation" value="mv"/>
</dbReference>
<dbReference type="VEuPathDB" id="VectorBase:FBgn0288310"/>
<dbReference type="eggNOG" id="KOG1786">
    <property type="taxonomic scope" value="Eukaryota"/>
</dbReference>
<dbReference type="HOGENOM" id="CLU_000276_0_0_1"/>
<dbReference type="InParanoid" id="Q9W060"/>
<dbReference type="OMA" id="TQCQVAN"/>
<dbReference type="OrthoDB" id="26681at2759"/>
<dbReference type="PhylomeDB" id="Q9W060"/>
<dbReference type="SignaLink" id="Q9W060"/>
<dbReference type="BioGRID-ORCS" id="38259">
    <property type="hits" value="0 hits in 1 CRISPR screen"/>
</dbReference>
<dbReference type="GenomeRNAi" id="38259"/>
<dbReference type="PRO" id="PR:Q9W060"/>
<dbReference type="Proteomes" id="UP000000803">
    <property type="component" value="Chromosome 3L"/>
</dbReference>
<dbReference type="Bgee" id="FBgn0265988">
    <property type="expression patterns" value="Expressed in visual pigment cell (sensu Nematoda and Protostomia) in testis and 93 other cell types or tissues"/>
</dbReference>
<dbReference type="ExpressionAtlas" id="Q9W060">
    <property type="expression patterns" value="baseline and differential"/>
</dbReference>
<dbReference type="GO" id="GO:0005737">
    <property type="term" value="C:cytoplasm"/>
    <property type="evidence" value="ECO:0007669"/>
    <property type="project" value="UniProtKB-KW"/>
</dbReference>
<dbReference type="GO" id="GO:0005819">
    <property type="term" value="C:spindle"/>
    <property type="evidence" value="ECO:0000314"/>
    <property type="project" value="UniProtKB"/>
</dbReference>
<dbReference type="GO" id="GO:0000922">
    <property type="term" value="C:spindle pole"/>
    <property type="evidence" value="ECO:0000314"/>
    <property type="project" value="UniProtKB"/>
</dbReference>
<dbReference type="GO" id="GO:0031982">
    <property type="term" value="C:vesicle"/>
    <property type="evidence" value="ECO:0000314"/>
    <property type="project" value="UniProtKB"/>
</dbReference>
<dbReference type="GO" id="GO:0045771">
    <property type="term" value="P:negative regulation of autophagosome size"/>
    <property type="evidence" value="ECO:0000315"/>
    <property type="project" value="FlyBase"/>
</dbReference>
<dbReference type="GO" id="GO:0031339">
    <property type="term" value="P:negative regulation of vesicle fusion"/>
    <property type="evidence" value="ECO:0000315"/>
    <property type="project" value="UniProtKB"/>
</dbReference>
<dbReference type="GO" id="GO:0006909">
    <property type="term" value="P:phagocytosis"/>
    <property type="evidence" value="ECO:0000315"/>
    <property type="project" value="FlyBase"/>
</dbReference>
<dbReference type="GO" id="GO:0090063">
    <property type="term" value="P:positive regulation of microtubule nucleation"/>
    <property type="evidence" value="ECO:0000315"/>
    <property type="project" value="UniProtKB"/>
</dbReference>
<dbReference type="GO" id="GO:0015031">
    <property type="term" value="P:protein transport"/>
    <property type="evidence" value="ECO:0007669"/>
    <property type="project" value="UniProtKB-KW"/>
</dbReference>
<dbReference type="CDD" id="cd06071">
    <property type="entry name" value="Beach"/>
    <property type="match status" value="1"/>
</dbReference>
<dbReference type="FunFam" id="2.130.10.10:FF:003481">
    <property type="entry name" value="Mauve"/>
    <property type="match status" value="1"/>
</dbReference>
<dbReference type="FunFam" id="1.10.1540.10:FF:000001">
    <property type="entry name" value="neurobeachin isoform X1"/>
    <property type="match status" value="1"/>
</dbReference>
<dbReference type="Gene3D" id="1.10.1540.10">
    <property type="entry name" value="BEACH domain"/>
    <property type="match status" value="1"/>
</dbReference>
<dbReference type="Gene3D" id="2.30.29.30">
    <property type="entry name" value="Pleckstrin-homology domain (PH domain)/Phosphotyrosine-binding domain (PTB)"/>
    <property type="match status" value="1"/>
</dbReference>
<dbReference type="Gene3D" id="2.130.10.10">
    <property type="entry name" value="YVTN repeat-like/Quinoprotein amine dehydrogenase"/>
    <property type="match status" value="1"/>
</dbReference>
<dbReference type="InterPro" id="IPR000409">
    <property type="entry name" value="BEACH_dom"/>
</dbReference>
<dbReference type="InterPro" id="IPR036372">
    <property type="entry name" value="BEACH_dom_sf"/>
</dbReference>
<dbReference type="InterPro" id="IPR050865">
    <property type="entry name" value="BEACH_Domain"/>
</dbReference>
<dbReference type="InterPro" id="IPR023362">
    <property type="entry name" value="PH-BEACH_dom"/>
</dbReference>
<dbReference type="InterPro" id="IPR011993">
    <property type="entry name" value="PH-like_dom_sf"/>
</dbReference>
<dbReference type="InterPro" id="IPR015943">
    <property type="entry name" value="WD40/YVTN_repeat-like_dom_sf"/>
</dbReference>
<dbReference type="InterPro" id="IPR019775">
    <property type="entry name" value="WD40_repeat_CS"/>
</dbReference>
<dbReference type="InterPro" id="IPR036322">
    <property type="entry name" value="WD40_repeat_dom_sf"/>
</dbReference>
<dbReference type="InterPro" id="IPR001680">
    <property type="entry name" value="WD40_rpt"/>
</dbReference>
<dbReference type="PANTHER" id="PTHR13743">
    <property type="entry name" value="BEIGE/BEACH-RELATED"/>
    <property type="match status" value="1"/>
</dbReference>
<dbReference type="PANTHER" id="PTHR13743:SF86">
    <property type="entry name" value="LYSOSOMAL-TRAFFICKING REGULATOR"/>
    <property type="match status" value="1"/>
</dbReference>
<dbReference type="Pfam" id="PF02138">
    <property type="entry name" value="Beach"/>
    <property type="match status" value="1"/>
</dbReference>
<dbReference type="SMART" id="SM01026">
    <property type="entry name" value="Beach"/>
    <property type="match status" value="1"/>
</dbReference>
<dbReference type="SMART" id="SM00320">
    <property type="entry name" value="WD40"/>
    <property type="match status" value="4"/>
</dbReference>
<dbReference type="SUPFAM" id="SSF81837">
    <property type="entry name" value="BEACH domain"/>
    <property type="match status" value="1"/>
</dbReference>
<dbReference type="SUPFAM" id="SSF50729">
    <property type="entry name" value="PH domain-like"/>
    <property type="match status" value="1"/>
</dbReference>
<dbReference type="SUPFAM" id="SSF50978">
    <property type="entry name" value="WD40 repeat-like"/>
    <property type="match status" value="1"/>
</dbReference>
<dbReference type="PROSITE" id="PS50197">
    <property type="entry name" value="BEACH"/>
    <property type="match status" value="1"/>
</dbReference>
<dbReference type="PROSITE" id="PS51783">
    <property type="entry name" value="PH_BEACH"/>
    <property type="match status" value="1"/>
</dbReference>
<dbReference type="PROSITE" id="PS00678">
    <property type="entry name" value="WD_REPEATS_1"/>
    <property type="match status" value="1"/>
</dbReference>
<dbReference type="PROSITE" id="PS50082">
    <property type="entry name" value="WD_REPEATS_2"/>
    <property type="match status" value="1"/>
</dbReference>
<dbReference type="PROSITE" id="PS50294">
    <property type="entry name" value="WD_REPEATS_REGION"/>
    <property type="match status" value="1"/>
</dbReference>
<evidence type="ECO:0000250" key="1">
    <source>
        <dbReference type="UniProtKB" id="Q99698"/>
    </source>
</evidence>
<evidence type="ECO:0000255" key="2"/>
<evidence type="ECO:0000255" key="3">
    <source>
        <dbReference type="PROSITE-ProRule" id="PRU00026"/>
    </source>
</evidence>
<evidence type="ECO:0000255" key="4">
    <source>
        <dbReference type="PROSITE-ProRule" id="PRU01119"/>
    </source>
</evidence>
<evidence type="ECO:0000256" key="5">
    <source>
        <dbReference type="SAM" id="MobiDB-lite"/>
    </source>
</evidence>
<evidence type="ECO:0000269" key="6">
    <source>
    </source>
</evidence>
<evidence type="ECO:0000269" key="7">
    <source>
    </source>
</evidence>
<evidence type="ECO:0000303" key="8">
    <source>
    </source>
</evidence>
<evidence type="ECO:0000305" key="9"/>
<evidence type="ECO:0000312" key="10">
    <source>
        <dbReference type="FlyBase" id="FBgn0288310"/>
    </source>
</evidence>
<evidence type="ECO:0000312" key="11">
    <source>
        <dbReference type="Proteomes" id="UP000000803"/>
    </source>
</evidence>
<accession>Q9W060</accession>
<sequence>MAGMEVKEKEEQLLLDTLIGLWSQYLQASELEDASVKDHWLWLLLYNLQFLDDKNLQDAWLNSHFNLMPEELCSYLLEQVYQIISEAKRSQESSPTHEPEQQDKCIKQLRKQHNLAQLILSTPSDCNKILALRTFLTDKLGHHLLTFLLRVDIKLIASQKSLCHLCINLFPNCKWSASNEQLIPMTSIAQFIGSFYLNSQSKKLRRQQQPKSQLPNHISNPIKSSFEDFRGTTRSSDELALLLIQLLTRCVDAEQESQLSVTVHNFALGHLCSSSEQDASGNNDELIKFELLQLIAHCVNNFYVLEQQQPNVHDFNSNFGQLLYALTANRRSPLLAHGVLYIMFGTLHNLVDNGVRELNQIDVRNFDACFEVLQEAAKSTNFSTAIFLHIYKMLLRLTDNLSSQEQHLQSLMESSASTAMPKQQQHPRHKRQRSSQLHCLGATSLSCYFQGKLYHLLPSLEAELQEHSVRSLLRTGSCCCHYNVRNYATCLQLATQLSSSYQKCAYKFLHYNVLHTIFVKRNPQGCPGCEDKLKSPVFHMDLLNIYKDNYKALLNTPAMLLFLKHLKHIAYLLPYDLASGILAEVALPIFRRYKELIESGESKRKISKVTPLQLPSKLENYRALHECLSIFVMYLSDIRLVKAFYNEENIRYMQDLLIIPELQRGVCDLIKVGIDNIAFLGENSQEQITLSRRLIQLQLNSSDRASQLFQALLYKCSKHSRAKFWLDESSTPAKLEGHKPADILYITALQWTLNFELLKTSQLFYNEFAKIYSIPVEMLDDEDEDEVETPTSELLPGEKKLRHGDKNIFDILKLNYNALGCFLMLPKATMGPTTSSTATTPTAGICGSSSLETLVSQLPLAGSTSVSVTTAASSDYADSTLDYASVIGNYDSYSRDMATPSFLQQLLACEPDESTVLFDIRGSQSSKDNPSNSLILPSEEEGATADGIINKLFSIVGSLFGGSPGSGGSANSPTRANIDADFFCLYEPNGECKKLLLKLFEATMAICIKGFQNEEVEKMQKHLRKLRAIILSHATDNWSEHGEQHARDNAVIQTLQTLLKIAELSSTHQEPTGVVNSPSGDSQQPRPRARSFNSGSVELPRLQTVKLPAKNSLATPPTPRRRPNSSEANAGVDADYFSTRASLSCAADSELELSENEHEFYLTADEGYEADGEIADLSESECELNGGVLAANESTWTPFQPSSRYRSHIMHQGLSQLVVQMLAELSLLCIKQPNGWTESLTQLANRLFVIRDYLGGPLCLLKGFAPILSCSDPRLRELQQSILELVTHLNTPEVLQCYYSILASKQPPVDLLMRHMHHISSGSLRKAQPCMELDFPIITDGKIVVTSEPLVSEQIERVRLHHQQCQTNTLFTRAACIFPVTQTRLWQPDGLTLSLWLELRGQQMHRSSMQFNDDETRYSGEDLTKLHLLSLGTNQAMVSIYISNNMQLIFELVKPNEQLAPVRVEEQIEANADTASVISANTQAANGGTIRQALKQTKLALLNSFGQMHLLNGHQASADSTGGYFESSAVQLQHLRLPRHKWMHLVFGLQQQADSVEISIFLDGLEQHTMRLPFRNLRQLTRVHSFQLLALGEGQPTGRSPGSSSSSRSTLDGSTPRYALSNVILFKRRLVDPLLMMNLTAMGPDFTEFTQCQVANWKPNYGFVSLGKLSSSNFGNHLDCMRQLRQARVLVYTAQQPDLVMSYDASQELDMACYGQPHGHMLYGELQQHQAQTLQAATSLSGGLSTLLYLFARIVELTGNASTQALALDLLLQVAHSDAQLYTEFQRQDYLSLIGYVIKSEKCSKDVQLLRSIVNNACSQVLITRKGDSINVNDNTMATLVYPRLMLTVLQRYSDWHRSGATHSDVLDMLFRCILALTRDKHPQRDFNMEQLQKCGLLGALLNLCKVYVIESPSPVQISPYAAECFVQILAVFSGSPPDSSMLDEIMKLLLLLHKPSDCYVTHDRTHFYFLLTAQQPTKERSLVAANLSRVTTSLRRQLHPQPQELDPERAERIKKLRRLHASTSGYRKAVNEFEEHLDQMADCSNLNKSALRLLSPVEATRWRLKFKRRHPTSANSPKRSPLKIARRRIHPHLHLGKIWQPSGHSTPSSGQSSLPNRKTDFYDQLGIIRLQQRLLILLKDFLCLLPDSSVDVVTRHYVKLELLLVLANQRSCAVRQAIIQLVDVLTKRLPSGELNAATKLMHPLHLANQLTIHGCDVGMFEACLAWINGMHCSLTDIQSCDAPVRIRQRFGLPSLLAIAEGTEPQWVFKALLRLYLQNPDDQTCLIEAGLLQCSVKALYKIYSLRVGQSNADESVVELLATIGERAMRSVGQINLVWDILNLLSFYQDKQPQLIMRSFRTAQAQLQLEWLTKFFEPNSFRVAVTNDSSLSHSELRTRVELLIDRCTQFFTVGVGQTTGPNYVASSQELALFQLLVSYGISSNQRCNNFIAWGLQPSRPRDLRSYIVDALWRSQQDEFQRAIICDAKMIKALLWLSLLEDMPEPIENLKPLCDALGIKENDSSWNLVHELDRLDQNRNNMAAKQKTLLEKTVYRFEPLVQQCVESSMVTTRKVAELQNAERKALMCHMKVYDDTYTYTKWLEIIRRMTHEGAPWHSAERAECSWELDDTEGPSRVHTRLRRCHLDIDRRFFMNEYRPGQGHREDLEPYVRPLDYLIASYDQQLNISLNSQILYNFAAKFLPVDGEIEGEIIITDLKLYFLATYRCRYFNVNCDIANITEIWLKRYQHQETAFEILLDTNKSLFFSLQNADDWKIMREVFCDKIVATPDQSKVIAITQQWREGLLTNWEYLMTLNQISGRTYNDLMQYPVFPWVLANYNSEVLDLREGHNFRRLGRPIAVQVEENEKHYISNYTYIDSTNTTMGSLILKPYHYSSHYSNSGTVLHFLVRVPPFTSYFLRYQDNDFDLPDRTFHALNTTWLLASRDSPTDVKELIPEFFCLPEMFENFERFKFGCRQNGERVEDVSLPPWSQRDSRLFVLIHRQALESELVRNQIHNWIDLIFGYKQSGESAVEAINVFHPATYAVFLDSEISDPIEREAVKTMVKTYGQMPRQLFKSPHPASKPLDYSLVGKPIVSTVRGLRWGVYVGSPQLKAPSWANIHKIPGTEHLVSFCNTNVVYALPGRASVMQGAEPDTYNVISWGYDDRIVRIQPLNKPQAKPKNLLHNGTFDDITACGCDVNSNQLWFGHKSGRISVYKCTGGLDSQQRASAKSRQSYARGFSLSYNSAFRKMTNKGIGGGGSERVDEAGNLHPTSSASSVNSSSISSGGDAFQRDGADLNWLGPTLLVRHTDEITCITLSVEFKIAVTAGRDGIAVIWDLNDWSYVRTIARPAEIHQSPITHVAISPTLGDIVTVHTLPQSCNTSTDPKPTAVATRPNSLNVADECFEVTEENLDDFVNVNVNPNGKSILRLHSVNARYVQHLVHEDRILAVCYSYIKEGVGVNVIATAVEGGFVRFWSSWNLSFVSELTTGTSPIRSICYSTHQHLVVLTRESHIQVWESEGLYGNAPKFPQIVYK</sequence>
<name>LYST_DROME</name>
<reference evidence="11" key="1">
    <citation type="journal article" date="2000" name="Science">
        <title>The genome sequence of Drosophila melanogaster.</title>
        <authorList>
            <person name="Adams M.D."/>
            <person name="Celniker S.E."/>
            <person name="Holt R.A."/>
            <person name="Evans C.A."/>
            <person name="Gocayne J.D."/>
            <person name="Amanatides P.G."/>
            <person name="Scherer S.E."/>
            <person name="Li P.W."/>
            <person name="Hoskins R.A."/>
            <person name="Galle R.F."/>
            <person name="George R.A."/>
            <person name="Lewis S.E."/>
            <person name="Richards S."/>
            <person name="Ashburner M."/>
            <person name="Henderson S.N."/>
            <person name="Sutton G.G."/>
            <person name="Wortman J.R."/>
            <person name="Yandell M.D."/>
            <person name="Zhang Q."/>
            <person name="Chen L.X."/>
            <person name="Brandon R.C."/>
            <person name="Rogers Y.-H.C."/>
            <person name="Blazej R.G."/>
            <person name="Champe M."/>
            <person name="Pfeiffer B.D."/>
            <person name="Wan K.H."/>
            <person name="Doyle C."/>
            <person name="Baxter E.G."/>
            <person name="Helt G."/>
            <person name="Nelson C.R."/>
            <person name="Miklos G.L.G."/>
            <person name="Abril J.F."/>
            <person name="Agbayani A."/>
            <person name="An H.-J."/>
            <person name="Andrews-Pfannkoch C."/>
            <person name="Baldwin D."/>
            <person name="Ballew R.M."/>
            <person name="Basu A."/>
            <person name="Baxendale J."/>
            <person name="Bayraktaroglu L."/>
            <person name="Beasley E.M."/>
            <person name="Beeson K.Y."/>
            <person name="Benos P.V."/>
            <person name="Berman B.P."/>
            <person name="Bhandari D."/>
            <person name="Bolshakov S."/>
            <person name="Borkova D."/>
            <person name="Botchan M.R."/>
            <person name="Bouck J."/>
            <person name="Brokstein P."/>
            <person name="Brottier P."/>
            <person name="Burtis K.C."/>
            <person name="Busam D.A."/>
            <person name="Butler H."/>
            <person name="Cadieu E."/>
            <person name="Center A."/>
            <person name="Chandra I."/>
            <person name="Cherry J.M."/>
            <person name="Cawley S."/>
            <person name="Dahlke C."/>
            <person name="Davenport L.B."/>
            <person name="Davies P."/>
            <person name="de Pablos B."/>
            <person name="Delcher A."/>
            <person name="Deng Z."/>
            <person name="Mays A.D."/>
            <person name="Dew I."/>
            <person name="Dietz S.M."/>
            <person name="Dodson K."/>
            <person name="Doup L.E."/>
            <person name="Downes M."/>
            <person name="Dugan-Rocha S."/>
            <person name="Dunkov B.C."/>
            <person name="Dunn P."/>
            <person name="Durbin K.J."/>
            <person name="Evangelista C.C."/>
            <person name="Ferraz C."/>
            <person name="Ferriera S."/>
            <person name="Fleischmann W."/>
            <person name="Fosler C."/>
            <person name="Gabrielian A.E."/>
            <person name="Garg N.S."/>
            <person name="Gelbart W.M."/>
            <person name="Glasser K."/>
            <person name="Glodek A."/>
            <person name="Gong F."/>
            <person name="Gorrell J.H."/>
            <person name="Gu Z."/>
            <person name="Guan P."/>
            <person name="Harris M."/>
            <person name="Harris N.L."/>
            <person name="Harvey D.A."/>
            <person name="Heiman T.J."/>
            <person name="Hernandez J.R."/>
            <person name="Houck J."/>
            <person name="Hostin D."/>
            <person name="Houston K.A."/>
            <person name="Howland T.J."/>
            <person name="Wei M.-H."/>
            <person name="Ibegwam C."/>
            <person name="Jalali M."/>
            <person name="Kalush F."/>
            <person name="Karpen G.H."/>
            <person name="Ke Z."/>
            <person name="Kennison J.A."/>
            <person name="Ketchum K.A."/>
            <person name="Kimmel B.E."/>
            <person name="Kodira C.D."/>
            <person name="Kraft C.L."/>
            <person name="Kravitz S."/>
            <person name="Kulp D."/>
            <person name="Lai Z."/>
            <person name="Lasko P."/>
            <person name="Lei Y."/>
            <person name="Levitsky A.A."/>
            <person name="Li J.H."/>
            <person name="Li Z."/>
            <person name="Liang Y."/>
            <person name="Lin X."/>
            <person name="Liu X."/>
            <person name="Mattei B."/>
            <person name="McIntosh T.C."/>
            <person name="McLeod M.P."/>
            <person name="McPherson D."/>
            <person name="Merkulov G."/>
            <person name="Milshina N.V."/>
            <person name="Mobarry C."/>
            <person name="Morris J."/>
            <person name="Moshrefi A."/>
            <person name="Mount S.M."/>
            <person name="Moy M."/>
            <person name="Murphy B."/>
            <person name="Murphy L."/>
            <person name="Muzny D.M."/>
            <person name="Nelson D.L."/>
            <person name="Nelson D.R."/>
            <person name="Nelson K.A."/>
            <person name="Nixon K."/>
            <person name="Nusskern D.R."/>
            <person name="Pacleb J.M."/>
            <person name="Palazzolo M."/>
            <person name="Pittman G.S."/>
            <person name="Pan S."/>
            <person name="Pollard J."/>
            <person name="Puri V."/>
            <person name="Reese M.G."/>
            <person name="Reinert K."/>
            <person name="Remington K."/>
            <person name="Saunders R.D.C."/>
            <person name="Scheeler F."/>
            <person name="Shen H."/>
            <person name="Shue B.C."/>
            <person name="Siden-Kiamos I."/>
            <person name="Simpson M."/>
            <person name="Skupski M.P."/>
            <person name="Smith T.J."/>
            <person name="Spier E."/>
            <person name="Spradling A.C."/>
            <person name="Stapleton M."/>
            <person name="Strong R."/>
            <person name="Sun E."/>
            <person name="Svirskas R."/>
            <person name="Tector C."/>
            <person name="Turner R."/>
            <person name="Venter E."/>
            <person name="Wang A.H."/>
            <person name="Wang X."/>
            <person name="Wang Z.-Y."/>
            <person name="Wassarman D.A."/>
            <person name="Weinstock G.M."/>
            <person name="Weissenbach J."/>
            <person name="Williams S.M."/>
            <person name="Woodage T."/>
            <person name="Worley K.C."/>
            <person name="Wu D."/>
            <person name="Yang S."/>
            <person name="Yao Q.A."/>
            <person name="Ye J."/>
            <person name="Yeh R.-F."/>
            <person name="Zaveri J.S."/>
            <person name="Zhan M."/>
            <person name="Zhang G."/>
            <person name="Zhao Q."/>
            <person name="Zheng L."/>
            <person name="Zheng X.H."/>
            <person name="Zhong F.N."/>
            <person name="Zhong W."/>
            <person name="Zhou X."/>
            <person name="Zhu S.C."/>
            <person name="Zhu X."/>
            <person name="Smith H.O."/>
            <person name="Gibbs R.A."/>
            <person name="Myers E.W."/>
            <person name="Rubin G.M."/>
            <person name="Venter J.C."/>
        </authorList>
    </citation>
    <scope>NUCLEOTIDE SEQUENCE [LARGE SCALE GENOMIC DNA]</scope>
    <source>
        <strain evidence="11">Berkeley</strain>
    </source>
</reference>
<reference evidence="11" key="2">
    <citation type="journal article" date="2002" name="Genome Biol.">
        <title>Annotation of the Drosophila melanogaster euchromatic genome: a systematic review.</title>
        <authorList>
            <person name="Misra S."/>
            <person name="Crosby M.A."/>
            <person name="Mungall C.J."/>
            <person name="Matthews B.B."/>
            <person name="Campbell K.S."/>
            <person name="Hradecky P."/>
            <person name="Huang Y."/>
            <person name="Kaminker J.S."/>
            <person name="Millburn G.H."/>
            <person name="Prochnik S.E."/>
            <person name="Smith C.D."/>
            <person name="Tupy J.L."/>
            <person name="Whitfield E.J."/>
            <person name="Bayraktaroglu L."/>
            <person name="Berman B.P."/>
            <person name="Bettencourt B.R."/>
            <person name="Celniker S.E."/>
            <person name="de Grey A.D.N.J."/>
            <person name="Drysdale R.A."/>
            <person name="Harris N.L."/>
            <person name="Richter J."/>
            <person name="Russo S."/>
            <person name="Schroeder A.J."/>
            <person name="Shu S.Q."/>
            <person name="Stapleton M."/>
            <person name="Yamada C."/>
            <person name="Ashburner M."/>
            <person name="Gelbart W.M."/>
            <person name="Rubin G.M."/>
            <person name="Lewis S.E."/>
        </authorList>
    </citation>
    <scope>GENOME REANNOTATION</scope>
    <source>
        <strain evidence="11">Berkeley</strain>
    </source>
</reference>
<reference evidence="9" key="3">
    <citation type="journal article" date="2012" name="Traffic">
        <title>Drosophila mauve mutants reveal a role of LYST homologs late in the maturation of phagosomes and autophagosomes.</title>
        <authorList>
            <person name="Rahman M."/>
            <person name="Haberman A."/>
            <person name="Tracy C."/>
            <person name="Ray S."/>
            <person name="Kraemer H."/>
        </authorList>
    </citation>
    <scope>FUNCTION</scope>
    <scope>MUTAGENESIS OF 2772-TRP--LYS-3535 AND 3160-TRP--LYS-3535</scope>
</reference>
<reference key="4">
    <citation type="journal article" date="2021" name="Dev. Cell">
        <title>Mauve/LYST limits fusion of lysosome-related organelles and promotes centrosomal recruitment of microtubule nucleating proteins.</title>
        <authorList>
            <person name="Lattao R."/>
            <person name="Rangone H."/>
            <person name="Llamazares S."/>
            <person name="Glover D.M."/>
        </authorList>
    </citation>
    <scope>FUNCTION</scope>
    <scope>INTERACTION WITH RAB5 AND MSPS</scope>
    <scope>SUBCELLULAR LOCATION</scope>
    <scope>DEVELOPMENTAL STAGE</scope>
</reference>
<keyword id="KW-0963">Cytoplasm</keyword>
<keyword id="KW-0206">Cytoskeleton</keyword>
<keyword id="KW-0581">Phagocytosis</keyword>
<keyword id="KW-0653">Protein transport</keyword>
<keyword id="KW-1185">Reference proteome</keyword>
<keyword id="KW-0677">Repeat</keyword>
<keyword id="KW-0813">Transport</keyword>
<keyword id="KW-0853">WD repeat</keyword>
<proteinExistence type="evidence at protein level"/>
<feature type="chain" id="PRO_0000450208" description="Lysosomal-trafficking regulator" evidence="9">
    <location>
        <begin position="1"/>
        <end position="3535"/>
    </location>
</feature>
<feature type="repeat" description="WD 1" evidence="2">
    <location>
        <begin position="689"/>
        <end position="736"/>
    </location>
</feature>
<feature type="domain" description="BEACH-type PH" evidence="4">
    <location>
        <begin position="2686"/>
        <end position="2784"/>
    </location>
</feature>
<feature type="domain" description="BEACH" evidence="3">
    <location>
        <begin position="2784"/>
        <end position="3081"/>
    </location>
</feature>
<feature type="repeat" description="WD 2" evidence="2">
    <location>
        <begin position="3307"/>
        <end position="3346"/>
    </location>
</feature>
<feature type="repeat" description="WD 3" evidence="2">
    <location>
        <begin position="3442"/>
        <end position="3486"/>
    </location>
</feature>
<feature type="repeat" description="WD 4" evidence="2">
    <location>
        <begin position="3489"/>
        <end position="3527"/>
    </location>
</feature>
<feature type="region of interest" description="Disordered" evidence="5">
    <location>
        <begin position="412"/>
        <end position="436"/>
    </location>
</feature>
<feature type="region of interest" description="Disordered" evidence="5">
    <location>
        <begin position="1066"/>
        <end position="1132"/>
    </location>
</feature>
<feature type="region of interest" description="Disordered" evidence="5">
    <location>
        <begin position="1592"/>
        <end position="1613"/>
    </location>
</feature>
<feature type="region of interest" description="Disordered" evidence="5">
    <location>
        <begin position="3254"/>
        <end position="3287"/>
    </location>
</feature>
<feature type="compositionally biased region" description="Polar residues" evidence="5">
    <location>
        <begin position="1066"/>
        <end position="1096"/>
    </location>
</feature>
<feature type="compositionally biased region" description="Low complexity" evidence="5">
    <location>
        <begin position="1596"/>
        <end position="1610"/>
    </location>
</feature>
<feature type="compositionally biased region" description="Low complexity" evidence="5">
    <location>
        <begin position="3273"/>
        <end position="3285"/>
    </location>
</feature>
<feature type="mutagenesis site" description="Results in eye color defects caused by oversized pigment granules; when associated with 3160-W--K-3535." evidence="6">
    <location>
        <begin position="2772"/>
        <end position="3535"/>
    </location>
</feature>
<feature type="mutagenesis site" description="Results in eye color defects caused by oversized pigment granules; when associated with 2772-W--K-3535." evidence="6">
    <location>
        <begin position="3160"/>
        <end position="3535"/>
    </location>
</feature>
<comment type="function">
    <text evidence="1 6 7">Adapter protein that regulates intracellular membrane fusion reactions (By similarity) (PubMed:33725482). Regulates the fusion of lysosome-related organelles (PubMed:33725482). Promotes microtubules nucleation and centrosomal recruitment of microtubule nucleating proteins such as msps (PubMed:33725482). In syncytial embryos, during the formation of yolk granules, suppresses vesicle fusion events with lipid droplets, possibly via interaction with Rab5 (PubMed:33725482). In the eye, regulates pigment granules size (PubMed:22934826). In hemocytes, required for the late steps of bacteria phagocytosis (PubMed:22934826). In fat body, required for autophagosome maturation (PubMed:22934826).</text>
</comment>
<comment type="subunit">
    <text evidence="7">Interacts with Rab5; the interaction is independent of GDP or GTP (PubMed:33725482). Interacts with msps (PubMed:33725482).</text>
</comment>
<comment type="subcellular location">
    <subcellularLocation>
        <location evidence="7">Vesicle</location>
    </subcellularLocation>
    <subcellularLocation>
        <location evidence="7">Cytoplasm</location>
        <location evidence="7">Cytoskeleton</location>
        <location evidence="7">Spindle</location>
    </subcellularLocation>
    <subcellularLocation>
        <location evidence="7">Cytoplasm</location>
        <location evidence="7">Cytoskeleton</location>
        <location evidence="7">Spindle pole</location>
    </subcellularLocation>
    <text evidence="7">Associated to yolk granules during vitellogenesis.</text>
</comment>
<comment type="developmental stage">
    <text evidence="7">Expressed in follicular epithelial cells on the side facing the developing oocyte where yolk components are secreted before uptake into the oocyte (at protein level) (PubMed:33725482). Expressed in syncytial embryos (at protein level) (PubMed:33725482).</text>
</comment>
<protein>
    <recommendedName>
        <fullName evidence="9">Lysosomal-trafficking regulator</fullName>
    </recommendedName>
    <alternativeName>
        <fullName evidence="8 10">Mauve protein</fullName>
    </alternativeName>
</protein>
<organism evidence="11">
    <name type="scientific">Drosophila melanogaster</name>
    <name type="common">Fruit fly</name>
    <dbReference type="NCBI Taxonomy" id="7227"/>
    <lineage>
        <taxon>Eukaryota</taxon>
        <taxon>Metazoa</taxon>
        <taxon>Ecdysozoa</taxon>
        <taxon>Arthropoda</taxon>
        <taxon>Hexapoda</taxon>
        <taxon>Insecta</taxon>
        <taxon>Pterygota</taxon>
        <taxon>Neoptera</taxon>
        <taxon>Endopterygota</taxon>
        <taxon>Diptera</taxon>
        <taxon>Brachycera</taxon>
        <taxon>Muscomorpha</taxon>
        <taxon>Ephydroidea</taxon>
        <taxon>Drosophilidae</taxon>
        <taxon>Drosophila</taxon>
        <taxon>Sophophora</taxon>
    </lineage>
</organism>